<feature type="chain" id="PRO_0000241675" description="Large ribosomal subunit protein uL24">
    <location>
        <begin position="1"/>
        <end position="132"/>
    </location>
</feature>
<reference key="1">
    <citation type="journal article" date="2007" name="ISME J.">
        <title>Population level functional diversity in a microbial community revealed by comparative genomic and metagenomic analyses.</title>
        <authorList>
            <person name="Bhaya D."/>
            <person name="Grossman A.R."/>
            <person name="Steunou A.-S."/>
            <person name="Khuri N."/>
            <person name="Cohan F.M."/>
            <person name="Hamamura N."/>
            <person name="Melendrez M.C."/>
            <person name="Bateson M.M."/>
            <person name="Ward D.M."/>
            <person name="Heidelberg J.F."/>
        </authorList>
    </citation>
    <scope>NUCLEOTIDE SEQUENCE [LARGE SCALE GENOMIC DNA]</scope>
    <source>
        <strain>JA-3-3Ab</strain>
    </source>
</reference>
<gene>
    <name evidence="1" type="primary">rplX</name>
    <name evidence="1" type="synonym">rpl24</name>
    <name type="ordered locus">CYA_1167</name>
</gene>
<evidence type="ECO:0000255" key="1">
    <source>
        <dbReference type="HAMAP-Rule" id="MF_01326"/>
    </source>
</evidence>
<evidence type="ECO:0000305" key="2"/>
<sequence>MVRPLKPSQIRRLIRQTGVRKHRNSLRYKMRIKKGDTVQVISGDDKGKIGEVLQVFPERNMVLVEGVNIVTYHRKPQREGESGRIETKEAPIHACKVMLYSKKQEVASRIGYQITADGRKVRVLKKTGEILD</sequence>
<dbReference type="EMBL" id="CP000239">
    <property type="protein sequence ID" value="ABC99355.1"/>
    <property type="molecule type" value="Genomic_DNA"/>
</dbReference>
<dbReference type="RefSeq" id="WP_011430036.1">
    <property type="nucleotide sequence ID" value="NC_007775.1"/>
</dbReference>
<dbReference type="SMR" id="Q2JQN1"/>
<dbReference type="STRING" id="321327.CYA_1167"/>
<dbReference type="KEGG" id="cya:CYA_1167"/>
<dbReference type="eggNOG" id="COG0198">
    <property type="taxonomic scope" value="Bacteria"/>
</dbReference>
<dbReference type="HOGENOM" id="CLU_093315_2_3_3"/>
<dbReference type="OrthoDB" id="9807419at2"/>
<dbReference type="Proteomes" id="UP000008818">
    <property type="component" value="Chromosome"/>
</dbReference>
<dbReference type="GO" id="GO:1990904">
    <property type="term" value="C:ribonucleoprotein complex"/>
    <property type="evidence" value="ECO:0007669"/>
    <property type="project" value="UniProtKB-KW"/>
</dbReference>
<dbReference type="GO" id="GO:0005840">
    <property type="term" value="C:ribosome"/>
    <property type="evidence" value="ECO:0007669"/>
    <property type="project" value="UniProtKB-KW"/>
</dbReference>
<dbReference type="GO" id="GO:0019843">
    <property type="term" value="F:rRNA binding"/>
    <property type="evidence" value="ECO:0007669"/>
    <property type="project" value="UniProtKB-UniRule"/>
</dbReference>
<dbReference type="GO" id="GO:0003735">
    <property type="term" value="F:structural constituent of ribosome"/>
    <property type="evidence" value="ECO:0007669"/>
    <property type="project" value="InterPro"/>
</dbReference>
<dbReference type="GO" id="GO:0006412">
    <property type="term" value="P:translation"/>
    <property type="evidence" value="ECO:0007669"/>
    <property type="project" value="UniProtKB-UniRule"/>
</dbReference>
<dbReference type="CDD" id="cd06089">
    <property type="entry name" value="KOW_RPL26"/>
    <property type="match status" value="1"/>
</dbReference>
<dbReference type="FunFam" id="2.30.30.30:FF:000004">
    <property type="entry name" value="50S ribosomal protein L24"/>
    <property type="match status" value="1"/>
</dbReference>
<dbReference type="Gene3D" id="2.30.30.30">
    <property type="match status" value="1"/>
</dbReference>
<dbReference type="HAMAP" id="MF_01326_B">
    <property type="entry name" value="Ribosomal_uL24_B"/>
    <property type="match status" value="1"/>
</dbReference>
<dbReference type="InterPro" id="IPR005824">
    <property type="entry name" value="KOW"/>
</dbReference>
<dbReference type="InterPro" id="IPR014722">
    <property type="entry name" value="Rib_uL2_dom2"/>
</dbReference>
<dbReference type="InterPro" id="IPR003256">
    <property type="entry name" value="Ribosomal_uL24"/>
</dbReference>
<dbReference type="InterPro" id="IPR005825">
    <property type="entry name" value="Ribosomal_uL24_CS"/>
</dbReference>
<dbReference type="InterPro" id="IPR041988">
    <property type="entry name" value="Ribosomal_uL24_KOW"/>
</dbReference>
<dbReference type="InterPro" id="IPR008991">
    <property type="entry name" value="Translation_prot_SH3-like_sf"/>
</dbReference>
<dbReference type="NCBIfam" id="TIGR01079">
    <property type="entry name" value="rplX_bact"/>
    <property type="match status" value="1"/>
</dbReference>
<dbReference type="PANTHER" id="PTHR12903">
    <property type="entry name" value="MITOCHONDRIAL RIBOSOMAL PROTEIN L24"/>
    <property type="match status" value="1"/>
</dbReference>
<dbReference type="Pfam" id="PF00467">
    <property type="entry name" value="KOW"/>
    <property type="match status" value="1"/>
</dbReference>
<dbReference type="Pfam" id="PF17136">
    <property type="entry name" value="ribosomal_L24"/>
    <property type="match status" value="1"/>
</dbReference>
<dbReference type="SMART" id="SM00739">
    <property type="entry name" value="KOW"/>
    <property type="match status" value="1"/>
</dbReference>
<dbReference type="SUPFAM" id="SSF50104">
    <property type="entry name" value="Translation proteins SH3-like domain"/>
    <property type="match status" value="1"/>
</dbReference>
<dbReference type="PROSITE" id="PS01108">
    <property type="entry name" value="RIBOSOMAL_L24"/>
    <property type="match status" value="1"/>
</dbReference>
<comment type="function">
    <text evidence="1">One of two assembly initiator proteins, it binds directly to the 5'-end of the 23S rRNA, where it nucleates assembly of the 50S subunit.</text>
</comment>
<comment type="function">
    <text evidence="1">One of the proteins that surrounds the polypeptide exit tunnel on the outside of the subunit.</text>
</comment>
<comment type="subunit">
    <text evidence="1">Part of the 50S ribosomal subunit.</text>
</comment>
<comment type="similarity">
    <text evidence="1">Belongs to the universal ribosomal protein uL24 family.</text>
</comment>
<keyword id="KW-0687">Ribonucleoprotein</keyword>
<keyword id="KW-0689">Ribosomal protein</keyword>
<keyword id="KW-0694">RNA-binding</keyword>
<keyword id="KW-0699">rRNA-binding</keyword>
<protein>
    <recommendedName>
        <fullName evidence="1">Large ribosomal subunit protein uL24</fullName>
    </recommendedName>
    <alternativeName>
        <fullName evidence="2">50S ribosomal protein L24</fullName>
    </alternativeName>
</protein>
<proteinExistence type="inferred from homology"/>
<accession>Q2JQN1</accession>
<organism>
    <name type="scientific">Synechococcus sp. (strain JA-3-3Ab)</name>
    <name type="common">Cyanobacteria bacterium Yellowstone A-Prime</name>
    <dbReference type="NCBI Taxonomy" id="321327"/>
    <lineage>
        <taxon>Bacteria</taxon>
        <taxon>Bacillati</taxon>
        <taxon>Cyanobacteriota</taxon>
        <taxon>Cyanophyceae</taxon>
        <taxon>Synechococcales</taxon>
        <taxon>Synechococcaceae</taxon>
        <taxon>Synechococcus</taxon>
    </lineage>
</organism>
<name>RL24_SYNJA</name>